<name>PTH_MYCBP</name>
<dbReference type="EC" id="3.1.1.29" evidence="1"/>
<dbReference type="EMBL" id="AM408590">
    <property type="protein sequence ID" value="CAL71058.1"/>
    <property type="molecule type" value="Genomic_DNA"/>
</dbReference>
<dbReference type="RefSeq" id="WP_003405251.1">
    <property type="nucleotide sequence ID" value="NC_008769.1"/>
</dbReference>
<dbReference type="BMRB" id="A1KHF2"/>
<dbReference type="SMR" id="A1KHF2"/>
<dbReference type="GeneID" id="45424985"/>
<dbReference type="KEGG" id="mbb:BCG_1071c"/>
<dbReference type="HOGENOM" id="CLU_062456_2_2_11"/>
<dbReference type="Proteomes" id="UP000001472">
    <property type="component" value="Chromosome"/>
</dbReference>
<dbReference type="GO" id="GO:0005737">
    <property type="term" value="C:cytoplasm"/>
    <property type="evidence" value="ECO:0007669"/>
    <property type="project" value="UniProtKB-SubCell"/>
</dbReference>
<dbReference type="GO" id="GO:0004045">
    <property type="term" value="F:peptidyl-tRNA hydrolase activity"/>
    <property type="evidence" value="ECO:0007669"/>
    <property type="project" value="UniProtKB-UniRule"/>
</dbReference>
<dbReference type="GO" id="GO:0000049">
    <property type="term" value="F:tRNA binding"/>
    <property type="evidence" value="ECO:0007669"/>
    <property type="project" value="UniProtKB-UniRule"/>
</dbReference>
<dbReference type="GO" id="GO:0006515">
    <property type="term" value="P:protein quality control for misfolded or incompletely synthesized proteins"/>
    <property type="evidence" value="ECO:0007669"/>
    <property type="project" value="UniProtKB-UniRule"/>
</dbReference>
<dbReference type="GO" id="GO:0072344">
    <property type="term" value="P:rescue of stalled ribosome"/>
    <property type="evidence" value="ECO:0007669"/>
    <property type="project" value="UniProtKB-UniRule"/>
</dbReference>
<dbReference type="CDD" id="cd00462">
    <property type="entry name" value="PTH"/>
    <property type="match status" value="1"/>
</dbReference>
<dbReference type="FunFam" id="3.40.50.1470:FF:000001">
    <property type="entry name" value="Peptidyl-tRNA hydrolase"/>
    <property type="match status" value="1"/>
</dbReference>
<dbReference type="Gene3D" id="3.40.50.1470">
    <property type="entry name" value="Peptidyl-tRNA hydrolase"/>
    <property type="match status" value="1"/>
</dbReference>
<dbReference type="HAMAP" id="MF_00083">
    <property type="entry name" value="Pept_tRNA_hydro_bact"/>
    <property type="match status" value="1"/>
</dbReference>
<dbReference type="InterPro" id="IPR001328">
    <property type="entry name" value="Pept_tRNA_hydro"/>
</dbReference>
<dbReference type="InterPro" id="IPR018171">
    <property type="entry name" value="Pept_tRNA_hydro_CS"/>
</dbReference>
<dbReference type="InterPro" id="IPR036416">
    <property type="entry name" value="Pept_tRNA_hydro_sf"/>
</dbReference>
<dbReference type="NCBIfam" id="TIGR00447">
    <property type="entry name" value="pth"/>
    <property type="match status" value="1"/>
</dbReference>
<dbReference type="PANTHER" id="PTHR17224">
    <property type="entry name" value="PEPTIDYL-TRNA HYDROLASE"/>
    <property type="match status" value="1"/>
</dbReference>
<dbReference type="PANTHER" id="PTHR17224:SF1">
    <property type="entry name" value="PEPTIDYL-TRNA HYDROLASE"/>
    <property type="match status" value="1"/>
</dbReference>
<dbReference type="Pfam" id="PF01195">
    <property type="entry name" value="Pept_tRNA_hydro"/>
    <property type="match status" value="1"/>
</dbReference>
<dbReference type="SUPFAM" id="SSF53178">
    <property type="entry name" value="Peptidyl-tRNA hydrolase-like"/>
    <property type="match status" value="1"/>
</dbReference>
<dbReference type="PROSITE" id="PS01195">
    <property type="entry name" value="PEPT_TRNA_HYDROL_1"/>
    <property type="match status" value="1"/>
</dbReference>
<dbReference type="PROSITE" id="PS01196">
    <property type="entry name" value="PEPT_TRNA_HYDROL_2"/>
    <property type="match status" value="1"/>
</dbReference>
<sequence length="191" mass="20456">MAEPLLVVGLGNPGANYARTRHNLGFVVADLLAARLGAKFKAHKRSGAEVATGRSAGRSLVLAKPRCYMNESGRQIGPLAKFYSVAPANIIVIHDDLDLEFGRIRLKIGGGEGGHNGLRSVVAALGTKDFQRVRIGIGRPPGRKDPAAFVLENFTPAERAEVPTICEQAADATELLIEQGMEPAQNRVHAW</sequence>
<accession>A1KHF2</accession>
<protein>
    <recommendedName>
        <fullName evidence="1">Peptidyl-tRNA hydrolase</fullName>
        <shortName evidence="1">Pth</shortName>
        <ecNumber evidence="1">3.1.1.29</ecNumber>
    </recommendedName>
</protein>
<feature type="chain" id="PRO_1000010612" description="Peptidyl-tRNA hydrolase">
    <location>
        <begin position="1"/>
        <end position="191"/>
    </location>
</feature>
<feature type="active site" description="Proton acceptor" evidence="1">
    <location>
        <position position="22"/>
    </location>
</feature>
<feature type="binding site" evidence="1">
    <location>
        <position position="17"/>
    </location>
    <ligand>
        <name>tRNA</name>
        <dbReference type="ChEBI" id="CHEBI:17843"/>
    </ligand>
</feature>
<feature type="binding site" evidence="1">
    <location>
        <position position="68"/>
    </location>
    <ligand>
        <name>tRNA</name>
        <dbReference type="ChEBI" id="CHEBI:17843"/>
    </ligand>
</feature>
<feature type="binding site" evidence="1">
    <location>
        <position position="70"/>
    </location>
    <ligand>
        <name>tRNA</name>
        <dbReference type="ChEBI" id="CHEBI:17843"/>
    </ligand>
</feature>
<feature type="binding site" evidence="1">
    <location>
        <position position="116"/>
    </location>
    <ligand>
        <name>tRNA</name>
        <dbReference type="ChEBI" id="CHEBI:17843"/>
    </ligand>
</feature>
<feature type="site" description="Discriminates between blocked and unblocked aminoacyl-tRNA" evidence="1">
    <location>
        <position position="12"/>
    </location>
</feature>
<feature type="site" description="Stabilizes the basic form of H active site to accept a proton" evidence="1">
    <location>
        <position position="95"/>
    </location>
</feature>
<evidence type="ECO:0000255" key="1">
    <source>
        <dbReference type="HAMAP-Rule" id="MF_00083"/>
    </source>
</evidence>
<comment type="function">
    <text evidence="1">Hydrolyzes ribosome-free peptidyl-tRNAs (with 1 or more amino acids incorporated), which drop off the ribosome during protein synthesis, or as a result of ribosome stalling.</text>
</comment>
<comment type="function">
    <text evidence="1">Catalyzes the release of premature peptidyl moieties from peptidyl-tRNA molecules trapped in stalled 50S ribosomal subunits, and thus maintains levels of free tRNAs and 50S ribosomes.</text>
</comment>
<comment type="catalytic activity">
    <reaction evidence="1">
        <text>an N-acyl-L-alpha-aminoacyl-tRNA + H2O = an N-acyl-L-amino acid + a tRNA + H(+)</text>
        <dbReference type="Rhea" id="RHEA:54448"/>
        <dbReference type="Rhea" id="RHEA-COMP:10123"/>
        <dbReference type="Rhea" id="RHEA-COMP:13883"/>
        <dbReference type="ChEBI" id="CHEBI:15377"/>
        <dbReference type="ChEBI" id="CHEBI:15378"/>
        <dbReference type="ChEBI" id="CHEBI:59874"/>
        <dbReference type="ChEBI" id="CHEBI:78442"/>
        <dbReference type="ChEBI" id="CHEBI:138191"/>
        <dbReference type="EC" id="3.1.1.29"/>
    </reaction>
</comment>
<comment type="subunit">
    <text evidence="1">Monomer.</text>
</comment>
<comment type="subcellular location">
    <subcellularLocation>
        <location evidence="1">Cytoplasm</location>
    </subcellularLocation>
</comment>
<comment type="similarity">
    <text evidence="1">Belongs to the PTH family.</text>
</comment>
<organism>
    <name type="scientific">Mycobacterium bovis (strain BCG / Pasteur 1173P2)</name>
    <dbReference type="NCBI Taxonomy" id="410289"/>
    <lineage>
        <taxon>Bacteria</taxon>
        <taxon>Bacillati</taxon>
        <taxon>Actinomycetota</taxon>
        <taxon>Actinomycetes</taxon>
        <taxon>Mycobacteriales</taxon>
        <taxon>Mycobacteriaceae</taxon>
        <taxon>Mycobacterium</taxon>
        <taxon>Mycobacterium tuberculosis complex</taxon>
    </lineage>
</organism>
<gene>
    <name evidence="1" type="primary">pth</name>
    <name type="ordered locus">BCG_1071c</name>
</gene>
<keyword id="KW-0963">Cytoplasm</keyword>
<keyword id="KW-0378">Hydrolase</keyword>
<keyword id="KW-0694">RNA-binding</keyword>
<keyword id="KW-0820">tRNA-binding</keyword>
<reference key="1">
    <citation type="journal article" date="2007" name="Proc. Natl. Acad. Sci. U.S.A.">
        <title>Genome plasticity of BCG and impact on vaccine efficacy.</title>
        <authorList>
            <person name="Brosch R."/>
            <person name="Gordon S.V."/>
            <person name="Garnier T."/>
            <person name="Eiglmeier K."/>
            <person name="Frigui W."/>
            <person name="Valenti P."/>
            <person name="Dos Santos S."/>
            <person name="Duthoy S."/>
            <person name="Lacroix C."/>
            <person name="Garcia-Pelayo C."/>
            <person name="Inwald J.K."/>
            <person name="Golby P."/>
            <person name="Garcia J.N."/>
            <person name="Hewinson R.G."/>
            <person name="Behr M.A."/>
            <person name="Quail M.A."/>
            <person name="Churcher C."/>
            <person name="Barrell B.G."/>
            <person name="Parkhill J."/>
            <person name="Cole S.T."/>
        </authorList>
    </citation>
    <scope>NUCLEOTIDE SEQUENCE [LARGE SCALE GENOMIC DNA]</scope>
    <source>
        <strain>BCG / Pasteur 1173P2</strain>
    </source>
</reference>
<proteinExistence type="inferred from homology"/>